<evidence type="ECO:0000250" key="1"/>
<evidence type="ECO:0000305" key="2"/>
<name>PGK_STAAN</name>
<organism>
    <name type="scientific">Staphylococcus aureus (strain N315)</name>
    <dbReference type="NCBI Taxonomy" id="158879"/>
    <lineage>
        <taxon>Bacteria</taxon>
        <taxon>Bacillati</taxon>
        <taxon>Bacillota</taxon>
        <taxon>Bacilli</taxon>
        <taxon>Bacillales</taxon>
        <taxon>Staphylococcaceae</taxon>
        <taxon>Staphylococcus</taxon>
    </lineage>
</organism>
<protein>
    <recommendedName>
        <fullName>Phosphoglycerate kinase</fullName>
        <ecNumber>2.7.2.3</ecNumber>
    </recommendedName>
</protein>
<comment type="catalytic activity">
    <reaction>
        <text>(2R)-3-phosphoglycerate + ATP = (2R)-3-phospho-glyceroyl phosphate + ADP</text>
        <dbReference type="Rhea" id="RHEA:14801"/>
        <dbReference type="ChEBI" id="CHEBI:30616"/>
        <dbReference type="ChEBI" id="CHEBI:57604"/>
        <dbReference type="ChEBI" id="CHEBI:58272"/>
        <dbReference type="ChEBI" id="CHEBI:456216"/>
        <dbReference type="EC" id="2.7.2.3"/>
    </reaction>
</comment>
<comment type="pathway">
    <text>Carbohydrate degradation; glycolysis; pyruvate from D-glyceraldehyde 3-phosphate: step 2/5.</text>
</comment>
<comment type="subunit">
    <text evidence="1">Monomer.</text>
</comment>
<comment type="subcellular location">
    <subcellularLocation>
        <location>Cytoplasm</location>
    </subcellularLocation>
</comment>
<comment type="similarity">
    <text evidence="2">Belongs to the phosphoglycerate kinase family.</text>
</comment>
<feature type="chain" id="PRO_0000146003" description="Phosphoglycerate kinase">
    <location>
        <begin position="1"/>
        <end position="396"/>
    </location>
</feature>
<feature type="binding site" evidence="1">
    <location>
        <begin position="21"/>
        <end position="23"/>
    </location>
    <ligand>
        <name>substrate</name>
    </ligand>
</feature>
<feature type="binding site" evidence="1">
    <location>
        <position position="36"/>
    </location>
    <ligand>
        <name>substrate</name>
    </ligand>
</feature>
<feature type="binding site" evidence="1">
    <location>
        <begin position="59"/>
        <end position="62"/>
    </location>
    <ligand>
        <name>substrate</name>
    </ligand>
</feature>
<feature type="binding site" evidence="1">
    <location>
        <position position="119"/>
    </location>
    <ligand>
        <name>substrate</name>
    </ligand>
</feature>
<feature type="binding site" evidence="1">
    <location>
        <position position="156"/>
    </location>
    <ligand>
        <name>substrate</name>
    </ligand>
</feature>
<feature type="binding site" evidence="1">
    <location>
        <position position="206"/>
    </location>
    <ligand>
        <name>ATP</name>
        <dbReference type="ChEBI" id="CHEBI:30616"/>
    </ligand>
</feature>
<feature type="binding site" evidence="1">
    <location>
        <position position="294"/>
    </location>
    <ligand>
        <name>ATP</name>
        <dbReference type="ChEBI" id="CHEBI:30616"/>
    </ligand>
</feature>
<feature type="binding site" evidence="1">
    <location>
        <position position="325"/>
    </location>
    <ligand>
        <name>ATP</name>
        <dbReference type="ChEBI" id="CHEBI:30616"/>
    </ligand>
</feature>
<feature type="binding site" evidence="1">
    <location>
        <begin position="352"/>
        <end position="355"/>
    </location>
    <ligand>
        <name>ATP</name>
        <dbReference type="ChEBI" id="CHEBI:30616"/>
    </ligand>
</feature>
<accession>P99135</accession>
<accession>Q9Z5C4</accession>
<gene>
    <name type="primary">pgk</name>
    <name type="ordered locus">SA0728</name>
</gene>
<reference key="1">
    <citation type="journal article" date="2001" name="Lancet">
        <title>Whole genome sequencing of meticillin-resistant Staphylococcus aureus.</title>
        <authorList>
            <person name="Kuroda M."/>
            <person name="Ohta T."/>
            <person name="Uchiyama I."/>
            <person name="Baba T."/>
            <person name="Yuzawa H."/>
            <person name="Kobayashi I."/>
            <person name="Cui L."/>
            <person name="Oguchi A."/>
            <person name="Aoki K."/>
            <person name="Nagai Y."/>
            <person name="Lian J.-Q."/>
            <person name="Ito T."/>
            <person name="Kanamori M."/>
            <person name="Matsumaru H."/>
            <person name="Maruyama A."/>
            <person name="Murakami H."/>
            <person name="Hosoyama A."/>
            <person name="Mizutani-Ui Y."/>
            <person name="Takahashi N.K."/>
            <person name="Sawano T."/>
            <person name="Inoue R."/>
            <person name="Kaito C."/>
            <person name="Sekimizu K."/>
            <person name="Hirakawa H."/>
            <person name="Kuhara S."/>
            <person name="Goto S."/>
            <person name="Yabuzaki J."/>
            <person name="Kanehisa M."/>
            <person name="Yamashita A."/>
            <person name="Oshima K."/>
            <person name="Furuya K."/>
            <person name="Yoshino C."/>
            <person name="Shiba T."/>
            <person name="Hattori M."/>
            <person name="Ogasawara N."/>
            <person name="Hayashi H."/>
            <person name="Hiramatsu K."/>
        </authorList>
    </citation>
    <scope>NUCLEOTIDE SEQUENCE [LARGE SCALE GENOMIC DNA]</scope>
    <source>
        <strain>N315</strain>
    </source>
</reference>
<reference key="2">
    <citation type="journal article" date="2005" name="J. Microbiol. Methods">
        <title>Correlation of proteomic and transcriptomic profiles of Staphylococcus aureus during the post-exponential phase of growth.</title>
        <authorList>
            <person name="Scherl A."/>
            <person name="Francois P."/>
            <person name="Bento M."/>
            <person name="Deshusses J.M."/>
            <person name="Charbonnier Y."/>
            <person name="Converset V."/>
            <person name="Huyghe A."/>
            <person name="Walter N."/>
            <person name="Hoogland C."/>
            <person name="Appel R.D."/>
            <person name="Sanchez J.-C."/>
            <person name="Zimmermann-Ivol C.G."/>
            <person name="Corthals G.L."/>
            <person name="Hochstrasser D.F."/>
            <person name="Schrenzel J."/>
        </authorList>
    </citation>
    <scope>IDENTIFICATION BY MASS SPECTROMETRY</scope>
    <source>
        <strain>N315</strain>
    </source>
</reference>
<reference key="3">
    <citation type="submission" date="2007-10" db="UniProtKB">
        <title>Shotgun proteomic analysis of total and membrane protein extracts of S. aureus strain N315.</title>
        <authorList>
            <person name="Vaezzadeh A.R."/>
            <person name="Deshusses J."/>
            <person name="Lescuyer P."/>
            <person name="Hochstrasser D.F."/>
        </authorList>
    </citation>
    <scope>IDENTIFICATION BY MASS SPECTROMETRY [LARGE SCALE ANALYSIS]</scope>
    <source>
        <strain>N315</strain>
    </source>
</reference>
<dbReference type="EC" id="2.7.2.3"/>
<dbReference type="EMBL" id="BA000018">
    <property type="protein sequence ID" value="BAB41961.1"/>
    <property type="molecule type" value="Genomic_DNA"/>
</dbReference>
<dbReference type="PIR" id="F89850">
    <property type="entry name" value="F89850"/>
</dbReference>
<dbReference type="RefSeq" id="WP_001074749.1">
    <property type="nucleotide sequence ID" value="NC_002745.2"/>
</dbReference>
<dbReference type="SMR" id="P99135"/>
<dbReference type="EnsemblBacteria" id="BAB41961">
    <property type="protein sequence ID" value="BAB41961"/>
    <property type="gene ID" value="BAB41961"/>
</dbReference>
<dbReference type="KEGG" id="sau:SA0728"/>
<dbReference type="HOGENOM" id="CLU_025427_0_2_9"/>
<dbReference type="UniPathway" id="UPA00109">
    <property type="reaction ID" value="UER00185"/>
</dbReference>
<dbReference type="GO" id="GO:0005829">
    <property type="term" value="C:cytosol"/>
    <property type="evidence" value="ECO:0007669"/>
    <property type="project" value="TreeGrafter"/>
</dbReference>
<dbReference type="GO" id="GO:0043531">
    <property type="term" value="F:ADP binding"/>
    <property type="evidence" value="ECO:0007669"/>
    <property type="project" value="TreeGrafter"/>
</dbReference>
<dbReference type="GO" id="GO:0005524">
    <property type="term" value="F:ATP binding"/>
    <property type="evidence" value="ECO:0007669"/>
    <property type="project" value="UniProtKB-KW"/>
</dbReference>
<dbReference type="GO" id="GO:0004618">
    <property type="term" value="F:phosphoglycerate kinase activity"/>
    <property type="evidence" value="ECO:0007669"/>
    <property type="project" value="UniProtKB-UniRule"/>
</dbReference>
<dbReference type="GO" id="GO:0006094">
    <property type="term" value="P:gluconeogenesis"/>
    <property type="evidence" value="ECO:0007669"/>
    <property type="project" value="TreeGrafter"/>
</dbReference>
<dbReference type="GO" id="GO:0006096">
    <property type="term" value="P:glycolytic process"/>
    <property type="evidence" value="ECO:0007669"/>
    <property type="project" value="UniProtKB-UniRule"/>
</dbReference>
<dbReference type="CDD" id="cd00318">
    <property type="entry name" value="Phosphoglycerate_kinase"/>
    <property type="match status" value="1"/>
</dbReference>
<dbReference type="FunFam" id="3.40.50.1260:FF:000001">
    <property type="entry name" value="Phosphoglycerate kinase"/>
    <property type="match status" value="1"/>
</dbReference>
<dbReference type="FunFam" id="3.40.50.1260:FF:000008">
    <property type="entry name" value="Phosphoglycerate kinase"/>
    <property type="match status" value="1"/>
</dbReference>
<dbReference type="Gene3D" id="3.40.50.1260">
    <property type="entry name" value="Phosphoglycerate kinase, N-terminal domain"/>
    <property type="match status" value="2"/>
</dbReference>
<dbReference type="HAMAP" id="MF_00145">
    <property type="entry name" value="Phosphoglyc_kinase"/>
    <property type="match status" value="1"/>
</dbReference>
<dbReference type="InterPro" id="IPR001576">
    <property type="entry name" value="Phosphoglycerate_kinase"/>
</dbReference>
<dbReference type="InterPro" id="IPR015911">
    <property type="entry name" value="Phosphoglycerate_kinase_CS"/>
</dbReference>
<dbReference type="InterPro" id="IPR015824">
    <property type="entry name" value="Phosphoglycerate_kinase_N"/>
</dbReference>
<dbReference type="InterPro" id="IPR036043">
    <property type="entry name" value="Phosphoglycerate_kinase_sf"/>
</dbReference>
<dbReference type="PANTHER" id="PTHR11406">
    <property type="entry name" value="PHOSPHOGLYCERATE KINASE"/>
    <property type="match status" value="1"/>
</dbReference>
<dbReference type="PANTHER" id="PTHR11406:SF23">
    <property type="entry name" value="PHOSPHOGLYCERATE KINASE 1, CHLOROPLASTIC-RELATED"/>
    <property type="match status" value="1"/>
</dbReference>
<dbReference type="Pfam" id="PF00162">
    <property type="entry name" value="PGK"/>
    <property type="match status" value="1"/>
</dbReference>
<dbReference type="PIRSF" id="PIRSF000724">
    <property type="entry name" value="Pgk"/>
    <property type="match status" value="1"/>
</dbReference>
<dbReference type="PRINTS" id="PR00477">
    <property type="entry name" value="PHGLYCKINASE"/>
</dbReference>
<dbReference type="SUPFAM" id="SSF53748">
    <property type="entry name" value="Phosphoglycerate kinase"/>
    <property type="match status" value="1"/>
</dbReference>
<dbReference type="PROSITE" id="PS00111">
    <property type="entry name" value="PGLYCERATE_KINASE"/>
    <property type="match status" value="1"/>
</dbReference>
<sequence length="396" mass="42602">MAKKIVSDLDLKGKTVLVRADFNVPLKDGEITNDNRIVQALPTIQYIIEQGGKIVLFSHLGKVKEESDKAKLTLRPVAEDLSKKLDKEVVFVPETRGEKLEAAIKDLKEGDVLLVENTRYEDLDGKKESKNDPELGKYWASLGDVFVNDAFGTAHREHASNVGISTHLETAAGFLMDKEIKFIGGVVNDPHKPVVAILGGAKVSDKINVIKNLVNIADKIIIGGGMAYTFLKAQGKEIGISLLEEDKIDFAKDLLEKHGDKIVLPVDTKVAKEFSNDAKITVVPSDSIPADQEGMDIGPNTVKLFADELEGAHTVVWNGPMGVFEFSNFAQGTIGVCKAIANLKDAITIIGGGDSAAAAISLGFENDFTHISTGGGASLEYLEGKELPGIKAINNK</sequence>
<proteinExistence type="evidence at protein level"/>
<keyword id="KW-0067">ATP-binding</keyword>
<keyword id="KW-0963">Cytoplasm</keyword>
<keyword id="KW-0324">Glycolysis</keyword>
<keyword id="KW-0418">Kinase</keyword>
<keyword id="KW-0547">Nucleotide-binding</keyword>
<keyword id="KW-0808">Transferase</keyword>